<accession>A0A7H0DNB9</accession>
<evidence type="ECO:0000250" key="1">
    <source>
        <dbReference type="UniProtKB" id="P68712"/>
    </source>
</evidence>
<evidence type="ECO:0000255" key="2"/>
<evidence type="ECO:0000305" key="3"/>
<protein>
    <recommendedName>
        <fullName>Virion membrane protein OPG147</fullName>
    </recommendedName>
</protein>
<dbReference type="EMBL" id="KC257461">
    <property type="protein sequence ID" value="AGF37036.1"/>
    <property type="molecule type" value="Genomic_DNA"/>
</dbReference>
<dbReference type="EMBL" id="MT903340">
    <property type="protein sequence ID" value="QNP13002.1"/>
    <property type="molecule type" value="Genomic_DNA"/>
</dbReference>
<dbReference type="RefSeq" id="YP_010377129.1">
    <property type="nucleotide sequence ID" value="NC_063383.1"/>
</dbReference>
<dbReference type="SMR" id="A0A7H0DNB9"/>
<dbReference type="GeneID" id="72551542"/>
<dbReference type="Proteomes" id="UP000516359">
    <property type="component" value="Genome"/>
</dbReference>
<dbReference type="GO" id="GO:0016020">
    <property type="term" value="C:membrane"/>
    <property type="evidence" value="ECO:0007669"/>
    <property type="project" value="UniProtKB-KW"/>
</dbReference>
<dbReference type="GO" id="GO:0019031">
    <property type="term" value="C:viral envelope"/>
    <property type="evidence" value="ECO:0007669"/>
    <property type="project" value="UniProtKB-KW"/>
</dbReference>
<dbReference type="GO" id="GO:0055036">
    <property type="term" value="C:virion membrane"/>
    <property type="evidence" value="ECO:0007669"/>
    <property type="project" value="UniProtKB-SubCell"/>
</dbReference>
<dbReference type="GO" id="GO:0039663">
    <property type="term" value="P:membrane fusion involved in viral entry into host cell"/>
    <property type="evidence" value="ECO:0007669"/>
    <property type="project" value="UniProtKB-KW"/>
</dbReference>
<dbReference type="GO" id="GO:0046718">
    <property type="term" value="P:symbiont entry into host cell"/>
    <property type="evidence" value="ECO:0007669"/>
    <property type="project" value="UniProtKB-KW"/>
</dbReference>
<dbReference type="InterPro" id="IPR007987">
    <property type="entry name" value="Poxvirus_A21"/>
</dbReference>
<dbReference type="Pfam" id="PF05323">
    <property type="entry name" value="Pox_A21"/>
    <property type="match status" value="1"/>
</dbReference>
<keyword id="KW-1015">Disulfide bond</keyword>
<keyword id="KW-1168">Fusion of virus membrane with host membrane</keyword>
<keyword id="KW-0472">Membrane</keyword>
<keyword id="KW-0597">Phosphoprotein</keyword>
<keyword id="KW-1185">Reference proteome</keyword>
<keyword id="KW-0735">Signal-anchor</keyword>
<keyword id="KW-0812">Transmembrane</keyword>
<keyword id="KW-1133">Transmembrane helix</keyword>
<keyword id="KW-0261">Viral envelope protein</keyword>
<keyword id="KW-1162">Viral penetration into host cytoplasm</keyword>
<keyword id="KW-0946">Virion</keyword>
<keyword id="KW-1160">Virus entry into host cell</keyword>
<name>PG147_MONPV</name>
<sequence length="115" mass="13416">MITLFLILCYFILIFNIIVPAISEKMRRERAAYVNYKRLNKNFICVDDRLFSYNFTTSGIKAKVAVNKNVPIPCSKINEVNNKDVDTLYCDKDRDDIPGFARSCYRAYSDLFFTT</sequence>
<organism>
    <name type="scientific">Monkeypox virus</name>
    <dbReference type="NCBI Taxonomy" id="10244"/>
    <lineage>
        <taxon>Viruses</taxon>
        <taxon>Varidnaviria</taxon>
        <taxon>Bamfordvirae</taxon>
        <taxon>Nucleocytoviricota</taxon>
        <taxon>Pokkesviricetes</taxon>
        <taxon>Chitovirales</taxon>
        <taxon>Poxviridae</taxon>
        <taxon>Chordopoxvirinae</taxon>
        <taxon>Orthopoxvirus</taxon>
    </lineage>
</organism>
<comment type="function">
    <text evidence="1">Envelope protein part of the entry-fusion complex responsible for the virus membrane fusion with host cell membrane during virus entry. Also plays a role in cell-cell fusion (syncytium formation).</text>
</comment>
<comment type="subunit">
    <text evidence="1">Part of a stable entry-fusion complex (EFC) which is at least composed of proteins OPG143, OPG147, OPG155, OPG086, OPG094, OPG107, OPG104, and OPG099. Formation of the viral membrane is necessary for the assembly of the complex.</text>
</comment>
<comment type="subcellular location">
    <subcellularLocation>
        <location evidence="1">Virion membrane</location>
        <topology evidence="1">Single-pass type III membrane protein</topology>
    </subcellularLocation>
    <text evidence="1">Component of the mature virion (MV) membrane. The mature virion is located in the cytoplasm of infected cells and is probably released by cell lysis.</text>
</comment>
<comment type="PTM">
    <text evidence="1">Contains two intramolecular disulfide bonds. They are created by the viral disulfide bond formation pathway, a poxvirus-specific pathway that operates on the cytoplasmic side of the MV membranes.</text>
</comment>
<comment type="similarity">
    <text evidence="3">Belongs to the orthopoxvirus OPG147 family.</text>
</comment>
<proteinExistence type="inferred from homology"/>
<organismHost>
    <name type="scientific">Cynomys gunnisoni</name>
    <name type="common">Gunnison's prairie dog</name>
    <name type="synonym">Spermophilus gunnisoni</name>
    <dbReference type="NCBI Taxonomy" id="45479"/>
</organismHost>
<organismHost>
    <name type="scientific">Cynomys leucurus</name>
    <name type="common">White-tailed prairie dog</name>
    <dbReference type="NCBI Taxonomy" id="99825"/>
</organismHost>
<organismHost>
    <name type="scientific">Cynomys ludovicianus</name>
    <name type="common">Black-tailed prairie dog</name>
    <dbReference type="NCBI Taxonomy" id="45480"/>
</organismHost>
<organismHost>
    <name type="scientific">Cynomys mexicanus</name>
    <name type="common">Mexican prairie dog</name>
    <dbReference type="NCBI Taxonomy" id="99826"/>
</organismHost>
<organismHost>
    <name type="scientific">Cynomys parvidens</name>
    <name type="common">Utah prairie dog</name>
    <dbReference type="NCBI Taxonomy" id="99827"/>
</organismHost>
<organismHost>
    <name type="scientific">Gliridae</name>
    <name type="common">dormice</name>
    <dbReference type="NCBI Taxonomy" id="30650"/>
</organismHost>
<organismHost>
    <name type="scientific">Heliosciurus ruwenzorii</name>
    <name type="common">Ruwenzori sun squirrel</name>
    <dbReference type="NCBI Taxonomy" id="226685"/>
</organismHost>
<organismHost>
    <name type="scientific">Homo sapiens</name>
    <name type="common">Human</name>
    <dbReference type="NCBI Taxonomy" id="9606"/>
</organismHost>
<organismHost>
    <name type="scientific">Mus musculus</name>
    <name type="common">Mouse</name>
    <dbReference type="NCBI Taxonomy" id="10090"/>
</organismHost>
<feature type="chain" id="PRO_0000457538" description="Virion membrane protein OPG147">
    <location>
        <begin position="1"/>
        <end position="115"/>
    </location>
</feature>
<feature type="transmembrane region" description="Helical; Signal-anchor for type III membrane protein" evidence="2">
    <location>
        <begin position="1"/>
        <end position="21"/>
    </location>
</feature>
<reference key="1">
    <citation type="journal article" date="2013" name="Am. J. Trop. Med. Hyg.">
        <title>Detection of human monkeypox in the republic of the congo following intensive community education.</title>
        <authorList>
            <person name="Reynolds M.G."/>
            <person name="Emerson G.L."/>
            <person name="Pukuta E."/>
            <person name="Karhemere S."/>
            <person name="Muyembe J.J."/>
            <person name="Bikindou A."/>
            <person name="McCollum A.M."/>
            <person name="Moses C."/>
            <person name="Wilkins K."/>
            <person name="Zhao H."/>
            <person name="Damon I.K."/>
            <person name="Karem K.L."/>
            <person name="Li Y."/>
            <person name="Carroll D.S."/>
            <person name="Mombouli J.V."/>
        </authorList>
    </citation>
    <scope>NUCLEOTIDE SEQUENCE [GENOMIC DNA]</scope>
    <source>
        <strain>ROC2010</strain>
    </source>
</reference>
<reference key="2">
    <citation type="journal article" date="2022" name="J. Infect. Dis.">
        <title>Exportation of Monkeypox virus from the African continent.</title>
        <authorList>
            <person name="Mauldin M.R."/>
            <person name="McCollum A.M."/>
            <person name="Nakazawa Y.J."/>
            <person name="Mandra A."/>
            <person name="Whitehouse E.R."/>
            <person name="Davidson W."/>
            <person name="Zhao H."/>
            <person name="Gao J."/>
            <person name="Li Y."/>
            <person name="Doty J."/>
            <person name="Yinka-Ogunleye A."/>
            <person name="Akinpelu A."/>
            <person name="Aruna O."/>
            <person name="Naidoo D."/>
            <person name="Lewandowski K."/>
            <person name="Afrough B."/>
            <person name="Graham V."/>
            <person name="Aarons E."/>
            <person name="Hewson R."/>
            <person name="Vipond R."/>
            <person name="Dunning J."/>
            <person name="Chand M."/>
            <person name="Brown C."/>
            <person name="Cohen-Gihon I."/>
            <person name="Erez N."/>
            <person name="Shifman O."/>
            <person name="Israeli O."/>
            <person name="Sharon M."/>
            <person name="Schwartz E."/>
            <person name="Beth-Din A."/>
            <person name="Zvi A."/>
            <person name="Mak T.M."/>
            <person name="Ng Y.K."/>
            <person name="Cui L."/>
            <person name="Lin R.T.P."/>
            <person name="Olson V.A."/>
            <person name="Brooks T."/>
            <person name="Paran N."/>
            <person name="Ihekweazu C."/>
            <person name="Reynolds M.G."/>
        </authorList>
    </citation>
    <scope>NUCLEOTIDE SEQUENCE [LARGE SCALE GENOMIC DNA]</scope>
    <source>
        <strain>MPXV-M5312_HM12_Rivers</strain>
    </source>
</reference>
<gene>
    <name type="primary">OPG147</name>
    <name type="ORF">MPXVgp131</name>
</gene>